<comment type="function">
    <text evidence="1">An essential GTPase which binds GTP, GDP and possibly (p)ppGpp with moderate affinity, with high nucleotide exchange rates and a fairly low GTP hydrolysis rate. Plays a role in control of the cell cycle, stress response, ribosome biogenesis and in those bacteria that undergo differentiation, in morphogenesis control.</text>
</comment>
<comment type="cofactor">
    <cofactor evidence="1">
        <name>Mg(2+)</name>
        <dbReference type="ChEBI" id="CHEBI:18420"/>
    </cofactor>
</comment>
<comment type="subunit">
    <text evidence="1">Monomer.</text>
</comment>
<comment type="subcellular location">
    <subcellularLocation>
        <location evidence="1">Cytoplasm</location>
    </subcellularLocation>
</comment>
<comment type="similarity">
    <text evidence="1">Belongs to the TRAFAC class OBG-HflX-like GTPase superfamily. OBG GTPase family.</text>
</comment>
<accession>B2USD4</accession>
<dbReference type="EC" id="3.6.5.-" evidence="1"/>
<dbReference type="EMBL" id="CP001072">
    <property type="protein sequence ID" value="ACD47766.1"/>
    <property type="molecule type" value="Genomic_DNA"/>
</dbReference>
<dbReference type="RefSeq" id="WP_000497207.1">
    <property type="nucleotide sequence ID" value="NC_010698.2"/>
</dbReference>
<dbReference type="SMR" id="B2USD4"/>
<dbReference type="KEGG" id="hps:HPSH_01570"/>
<dbReference type="HOGENOM" id="CLU_011747_2_0_7"/>
<dbReference type="GO" id="GO:0005737">
    <property type="term" value="C:cytoplasm"/>
    <property type="evidence" value="ECO:0007669"/>
    <property type="project" value="UniProtKB-SubCell"/>
</dbReference>
<dbReference type="GO" id="GO:0005525">
    <property type="term" value="F:GTP binding"/>
    <property type="evidence" value="ECO:0007669"/>
    <property type="project" value="UniProtKB-UniRule"/>
</dbReference>
<dbReference type="GO" id="GO:0003924">
    <property type="term" value="F:GTPase activity"/>
    <property type="evidence" value="ECO:0007669"/>
    <property type="project" value="UniProtKB-UniRule"/>
</dbReference>
<dbReference type="GO" id="GO:0000287">
    <property type="term" value="F:magnesium ion binding"/>
    <property type="evidence" value="ECO:0007669"/>
    <property type="project" value="InterPro"/>
</dbReference>
<dbReference type="GO" id="GO:0042254">
    <property type="term" value="P:ribosome biogenesis"/>
    <property type="evidence" value="ECO:0007669"/>
    <property type="project" value="UniProtKB-UniRule"/>
</dbReference>
<dbReference type="CDD" id="cd01898">
    <property type="entry name" value="Obg"/>
    <property type="match status" value="1"/>
</dbReference>
<dbReference type="FunFam" id="2.70.210.12:FF:000001">
    <property type="entry name" value="GTPase Obg"/>
    <property type="match status" value="1"/>
</dbReference>
<dbReference type="Gene3D" id="2.70.210.12">
    <property type="entry name" value="GTP1/OBG domain"/>
    <property type="match status" value="1"/>
</dbReference>
<dbReference type="Gene3D" id="3.40.50.300">
    <property type="entry name" value="P-loop containing nucleotide triphosphate hydrolases"/>
    <property type="match status" value="1"/>
</dbReference>
<dbReference type="HAMAP" id="MF_01454">
    <property type="entry name" value="GTPase_Obg"/>
    <property type="match status" value="1"/>
</dbReference>
<dbReference type="InterPro" id="IPR031167">
    <property type="entry name" value="G_OBG"/>
</dbReference>
<dbReference type="InterPro" id="IPR006073">
    <property type="entry name" value="GTP-bd"/>
</dbReference>
<dbReference type="InterPro" id="IPR014100">
    <property type="entry name" value="GTP-bd_Obg/CgtA"/>
</dbReference>
<dbReference type="InterPro" id="IPR006074">
    <property type="entry name" value="GTP1-OBG_CS"/>
</dbReference>
<dbReference type="InterPro" id="IPR006169">
    <property type="entry name" value="GTP1_OBG_dom"/>
</dbReference>
<dbReference type="InterPro" id="IPR036726">
    <property type="entry name" value="GTP1_OBG_dom_sf"/>
</dbReference>
<dbReference type="InterPro" id="IPR045086">
    <property type="entry name" value="OBG_GTPase"/>
</dbReference>
<dbReference type="InterPro" id="IPR027417">
    <property type="entry name" value="P-loop_NTPase"/>
</dbReference>
<dbReference type="NCBIfam" id="TIGR02729">
    <property type="entry name" value="Obg_CgtA"/>
    <property type="match status" value="1"/>
</dbReference>
<dbReference type="NCBIfam" id="NF008955">
    <property type="entry name" value="PRK12297.1"/>
    <property type="match status" value="1"/>
</dbReference>
<dbReference type="NCBIfam" id="NF008956">
    <property type="entry name" value="PRK12299.1"/>
    <property type="match status" value="1"/>
</dbReference>
<dbReference type="PANTHER" id="PTHR11702">
    <property type="entry name" value="DEVELOPMENTALLY REGULATED GTP-BINDING PROTEIN-RELATED"/>
    <property type="match status" value="1"/>
</dbReference>
<dbReference type="PANTHER" id="PTHR11702:SF31">
    <property type="entry name" value="MITOCHONDRIAL RIBOSOME-ASSOCIATED GTPASE 2"/>
    <property type="match status" value="1"/>
</dbReference>
<dbReference type="Pfam" id="PF01018">
    <property type="entry name" value="GTP1_OBG"/>
    <property type="match status" value="1"/>
</dbReference>
<dbReference type="Pfam" id="PF01926">
    <property type="entry name" value="MMR_HSR1"/>
    <property type="match status" value="1"/>
</dbReference>
<dbReference type="PIRSF" id="PIRSF002401">
    <property type="entry name" value="GTP_bd_Obg/CgtA"/>
    <property type="match status" value="1"/>
</dbReference>
<dbReference type="PRINTS" id="PR00326">
    <property type="entry name" value="GTP1OBG"/>
</dbReference>
<dbReference type="SUPFAM" id="SSF82051">
    <property type="entry name" value="Obg GTP-binding protein N-terminal domain"/>
    <property type="match status" value="1"/>
</dbReference>
<dbReference type="SUPFAM" id="SSF52540">
    <property type="entry name" value="P-loop containing nucleoside triphosphate hydrolases"/>
    <property type="match status" value="1"/>
</dbReference>
<dbReference type="PROSITE" id="PS51710">
    <property type="entry name" value="G_OBG"/>
    <property type="match status" value="1"/>
</dbReference>
<dbReference type="PROSITE" id="PS00905">
    <property type="entry name" value="GTP1_OBG"/>
    <property type="match status" value="1"/>
</dbReference>
<dbReference type="PROSITE" id="PS51883">
    <property type="entry name" value="OBG"/>
    <property type="match status" value="1"/>
</dbReference>
<name>OBG_HELPS</name>
<keyword id="KW-0963">Cytoplasm</keyword>
<keyword id="KW-0342">GTP-binding</keyword>
<keyword id="KW-0378">Hydrolase</keyword>
<keyword id="KW-0460">Magnesium</keyword>
<keyword id="KW-0479">Metal-binding</keyword>
<keyword id="KW-0547">Nucleotide-binding</keyword>
<feature type="chain" id="PRO_0000385976" description="GTPase Obg">
    <location>
        <begin position="1"/>
        <end position="360"/>
    </location>
</feature>
<feature type="domain" description="Obg" evidence="2">
    <location>
        <begin position="1"/>
        <end position="156"/>
    </location>
</feature>
<feature type="domain" description="OBG-type G" evidence="1">
    <location>
        <begin position="157"/>
        <end position="360"/>
    </location>
</feature>
<feature type="binding site" evidence="1">
    <location>
        <begin position="163"/>
        <end position="170"/>
    </location>
    <ligand>
        <name>GTP</name>
        <dbReference type="ChEBI" id="CHEBI:37565"/>
    </ligand>
</feature>
<feature type="binding site" evidence="1">
    <location>
        <position position="170"/>
    </location>
    <ligand>
        <name>Mg(2+)</name>
        <dbReference type="ChEBI" id="CHEBI:18420"/>
    </ligand>
</feature>
<feature type="binding site" evidence="1">
    <location>
        <begin position="188"/>
        <end position="192"/>
    </location>
    <ligand>
        <name>GTP</name>
        <dbReference type="ChEBI" id="CHEBI:37565"/>
    </ligand>
</feature>
<feature type="binding site" evidence="1">
    <location>
        <position position="190"/>
    </location>
    <ligand>
        <name>Mg(2+)</name>
        <dbReference type="ChEBI" id="CHEBI:18420"/>
    </ligand>
</feature>
<feature type="binding site" evidence="1">
    <location>
        <begin position="210"/>
        <end position="213"/>
    </location>
    <ligand>
        <name>GTP</name>
        <dbReference type="ChEBI" id="CHEBI:37565"/>
    </ligand>
</feature>
<feature type="binding site" evidence="1">
    <location>
        <begin position="279"/>
        <end position="282"/>
    </location>
    <ligand>
        <name>GTP</name>
        <dbReference type="ChEBI" id="CHEBI:37565"/>
    </ligand>
</feature>
<feature type="binding site" evidence="1">
    <location>
        <begin position="341"/>
        <end position="343"/>
    </location>
    <ligand>
        <name>GTP</name>
        <dbReference type="ChEBI" id="CHEBI:37565"/>
    </ligand>
</feature>
<evidence type="ECO:0000255" key="1">
    <source>
        <dbReference type="HAMAP-Rule" id="MF_01454"/>
    </source>
</evidence>
<evidence type="ECO:0000255" key="2">
    <source>
        <dbReference type="PROSITE-ProRule" id="PRU01231"/>
    </source>
</evidence>
<sequence length="360" mass="38808">MFVDSVEIIIASGKGGPGMVSFRREKFVIKGGPDGGDGGDGGDVYFEVDNNTDTLASFRGTKHHKAKNGAPGGTRNCAGKKGEDKIIVVPPGTQVFVDDALWLDLVEPKERVLALKGGKGGLGNAHFKSATKQQPTYAQKGLEGVEKCVRLELKLIADIGLVGFPNAGKSTLISTISNAKPKIANYEFTTLVPNLGVVSVDEKSEFLMADIPGIIEGASEGKGLGISFLKHIERTKVLAFVLDASRLDLGIKEQYQRLRLELEKFSPALANKPFGVLLNKCDVVENIDEMAKDFCTFLNLEAQKLEAFGLEPYLGFLHPHLTSDFENNPNEKSALFVLPLSALSALNTHALKFVLLEALP</sequence>
<reference key="1">
    <citation type="submission" date="2008-05" db="EMBL/GenBank/DDBJ databases">
        <title>Genome sequence of Helicobacter pylori from the remote Amazon: traces of Asian ancestry of the first Americans.</title>
        <authorList>
            <person name="Kersulyte D."/>
            <person name="Kalia A."/>
            <person name="Gilman R.H."/>
            <person name="Berg D.E."/>
        </authorList>
    </citation>
    <scope>NUCLEOTIDE SEQUENCE [LARGE SCALE GENOMIC DNA]</scope>
    <source>
        <strain>Shi470</strain>
    </source>
</reference>
<gene>
    <name evidence="1" type="primary">obg</name>
    <name type="ordered locus">HPSH_01570</name>
</gene>
<organism>
    <name type="scientific">Helicobacter pylori (strain Shi470)</name>
    <dbReference type="NCBI Taxonomy" id="512562"/>
    <lineage>
        <taxon>Bacteria</taxon>
        <taxon>Pseudomonadati</taxon>
        <taxon>Campylobacterota</taxon>
        <taxon>Epsilonproteobacteria</taxon>
        <taxon>Campylobacterales</taxon>
        <taxon>Helicobacteraceae</taxon>
        <taxon>Helicobacter</taxon>
    </lineage>
</organism>
<protein>
    <recommendedName>
        <fullName evidence="1">GTPase Obg</fullName>
        <ecNumber evidence="1">3.6.5.-</ecNumber>
    </recommendedName>
    <alternativeName>
        <fullName evidence="1">GTP-binding protein Obg</fullName>
    </alternativeName>
</protein>
<proteinExistence type="inferred from homology"/>